<name>ISPE_BURA4</name>
<sequence>MTDSTRSLRNCLAPAKLNLFLHITGRRPNGYHDLQSVFQLLNWGDTLHFTLRDDGRVARVTDVPGVPEESDLVVRAANLLKAHTGTAAGVDIEIDKCLPMGAGLGGGSSDAATTLLALNRLWQLDLSRTELQSLAVKLGADVPFFVFGKNAFAEGIGEELAEVELPTRWFLVVTPRVHVPTAEIFSDELLTRNTKPVTIADFLAQQNSDAGWPDSFGRNDMQQVVTSKYAEVAQVVKWLYNVTPARMTGSGASVFAAFQSKHEAEAAKAQLPTGWNGAVAESLNEHPLFAFAS</sequence>
<feature type="chain" id="PRO_1000092064" description="4-diphosphocytidyl-2-C-methyl-D-erythritol kinase">
    <location>
        <begin position="1"/>
        <end position="293"/>
    </location>
</feature>
<feature type="active site" evidence="1">
    <location>
        <position position="16"/>
    </location>
</feature>
<feature type="active site" evidence="1">
    <location>
        <position position="141"/>
    </location>
</feature>
<feature type="binding site" evidence="1">
    <location>
        <begin position="99"/>
        <end position="109"/>
    </location>
    <ligand>
        <name>ATP</name>
        <dbReference type="ChEBI" id="CHEBI:30616"/>
    </ligand>
</feature>
<evidence type="ECO:0000255" key="1">
    <source>
        <dbReference type="HAMAP-Rule" id="MF_00061"/>
    </source>
</evidence>
<accession>B1YN51</accession>
<protein>
    <recommendedName>
        <fullName evidence="1">4-diphosphocytidyl-2-C-methyl-D-erythritol kinase</fullName>
        <shortName evidence="1">CMK</shortName>
        <ecNumber evidence="1">2.7.1.148</ecNumber>
    </recommendedName>
    <alternativeName>
        <fullName evidence="1">4-(cytidine-5'-diphospho)-2-C-methyl-D-erythritol kinase</fullName>
    </alternativeName>
</protein>
<reference key="1">
    <citation type="submission" date="2008-04" db="EMBL/GenBank/DDBJ databases">
        <title>Complete sequence of chromosome 1 of Burkholderia ambifaria MC40-6.</title>
        <authorList>
            <person name="Copeland A."/>
            <person name="Lucas S."/>
            <person name="Lapidus A."/>
            <person name="Glavina del Rio T."/>
            <person name="Dalin E."/>
            <person name="Tice H."/>
            <person name="Pitluck S."/>
            <person name="Chain P."/>
            <person name="Malfatti S."/>
            <person name="Shin M."/>
            <person name="Vergez L."/>
            <person name="Lang D."/>
            <person name="Schmutz J."/>
            <person name="Larimer F."/>
            <person name="Land M."/>
            <person name="Hauser L."/>
            <person name="Kyrpides N."/>
            <person name="Lykidis A."/>
            <person name="Ramette A."/>
            <person name="Konstantinidis K."/>
            <person name="Tiedje J."/>
            <person name="Richardson P."/>
        </authorList>
    </citation>
    <scope>NUCLEOTIDE SEQUENCE [LARGE SCALE GENOMIC DNA]</scope>
    <source>
        <strain>MC40-6</strain>
    </source>
</reference>
<comment type="function">
    <text evidence="1">Catalyzes the phosphorylation of the position 2 hydroxy group of 4-diphosphocytidyl-2C-methyl-D-erythritol.</text>
</comment>
<comment type="catalytic activity">
    <reaction evidence="1">
        <text>4-CDP-2-C-methyl-D-erythritol + ATP = 4-CDP-2-C-methyl-D-erythritol 2-phosphate + ADP + H(+)</text>
        <dbReference type="Rhea" id="RHEA:18437"/>
        <dbReference type="ChEBI" id="CHEBI:15378"/>
        <dbReference type="ChEBI" id="CHEBI:30616"/>
        <dbReference type="ChEBI" id="CHEBI:57823"/>
        <dbReference type="ChEBI" id="CHEBI:57919"/>
        <dbReference type="ChEBI" id="CHEBI:456216"/>
        <dbReference type="EC" id="2.7.1.148"/>
    </reaction>
</comment>
<comment type="pathway">
    <text evidence="1">Isoprenoid biosynthesis; isopentenyl diphosphate biosynthesis via DXP pathway; isopentenyl diphosphate from 1-deoxy-D-xylulose 5-phosphate: step 3/6.</text>
</comment>
<comment type="similarity">
    <text evidence="1">Belongs to the GHMP kinase family. IspE subfamily.</text>
</comment>
<keyword id="KW-0067">ATP-binding</keyword>
<keyword id="KW-0414">Isoprene biosynthesis</keyword>
<keyword id="KW-0418">Kinase</keyword>
<keyword id="KW-0547">Nucleotide-binding</keyword>
<keyword id="KW-0808">Transferase</keyword>
<gene>
    <name evidence="1" type="primary">ispE</name>
    <name type="ordered locus">BamMC406_2719</name>
</gene>
<organism>
    <name type="scientific">Burkholderia ambifaria (strain MC40-6)</name>
    <dbReference type="NCBI Taxonomy" id="398577"/>
    <lineage>
        <taxon>Bacteria</taxon>
        <taxon>Pseudomonadati</taxon>
        <taxon>Pseudomonadota</taxon>
        <taxon>Betaproteobacteria</taxon>
        <taxon>Burkholderiales</taxon>
        <taxon>Burkholderiaceae</taxon>
        <taxon>Burkholderia</taxon>
        <taxon>Burkholderia cepacia complex</taxon>
    </lineage>
</organism>
<proteinExistence type="inferred from homology"/>
<dbReference type="EC" id="2.7.1.148" evidence="1"/>
<dbReference type="EMBL" id="CP001025">
    <property type="protein sequence ID" value="ACB65196.1"/>
    <property type="molecule type" value="Genomic_DNA"/>
</dbReference>
<dbReference type="RefSeq" id="WP_012364737.1">
    <property type="nucleotide sequence ID" value="NC_010551.1"/>
</dbReference>
<dbReference type="SMR" id="B1YN51"/>
<dbReference type="KEGG" id="bac:BamMC406_2719"/>
<dbReference type="HOGENOM" id="CLU_053057_3_0_4"/>
<dbReference type="OrthoDB" id="9809438at2"/>
<dbReference type="UniPathway" id="UPA00056">
    <property type="reaction ID" value="UER00094"/>
</dbReference>
<dbReference type="Proteomes" id="UP000001680">
    <property type="component" value="Chromosome 1"/>
</dbReference>
<dbReference type="GO" id="GO:0050515">
    <property type="term" value="F:4-(cytidine 5'-diphospho)-2-C-methyl-D-erythritol kinase activity"/>
    <property type="evidence" value="ECO:0007669"/>
    <property type="project" value="UniProtKB-UniRule"/>
</dbReference>
<dbReference type="GO" id="GO:0005524">
    <property type="term" value="F:ATP binding"/>
    <property type="evidence" value="ECO:0007669"/>
    <property type="project" value="UniProtKB-UniRule"/>
</dbReference>
<dbReference type="GO" id="GO:0019288">
    <property type="term" value="P:isopentenyl diphosphate biosynthetic process, methylerythritol 4-phosphate pathway"/>
    <property type="evidence" value="ECO:0007669"/>
    <property type="project" value="UniProtKB-UniRule"/>
</dbReference>
<dbReference type="GO" id="GO:0016114">
    <property type="term" value="P:terpenoid biosynthetic process"/>
    <property type="evidence" value="ECO:0007669"/>
    <property type="project" value="InterPro"/>
</dbReference>
<dbReference type="Gene3D" id="3.30.230.10">
    <property type="match status" value="1"/>
</dbReference>
<dbReference type="Gene3D" id="3.30.70.890">
    <property type="entry name" value="GHMP kinase, C-terminal domain"/>
    <property type="match status" value="1"/>
</dbReference>
<dbReference type="HAMAP" id="MF_00061">
    <property type="entry name" value="IspE"/>
    <property type="match status" value="1"/>
</dbReference>
<dbReference type="InterPro" id="IPR013750">
    <property type="entry name" value="GHMP_kinase_C_dom"/>
</dbReference>
<dbReference type="InterPro" id="IPR036554">
    <property type="entry name" value="GHMP_kinase_C_sf"/>
</dbReference>
<dbReference type="InterPro" id="IPR006204">
    <property type="entry name" value="GHMP_kinase_N_dom"/>
</dbReference>
<dbReference type="InterPro" id="IPR004424">
    <property type="entry name" value="IspE"/>
</dbReference>
<dbReference type="InterPro" id="IPR020568">
    <property type="entry name" value="Ribosomal_Su5_D2-typ_SF"/>
</dbReference>
<dbReference type="InterPro" id="IPR014721">
    <property type="entry name" value="Ribsml_uS5_D2-typ_fold_subgr"/>
</dbReference>
<dbReference type="NCBIfam" id="TIGR00154">
    <property type="entry name" value="ispE"/>
    <property type="match status" value="1"/>
</dbReference>
<dbReference type="NCBIfam" id="NF011202">
    <property type="entry name" value="PRK14608.1"/>
    <property type="match status" value="1"/>
</dbReference>
<dbReference type="PANTHER" id="PTHR43527">
    <property type="entry name" value="4-DIPHOSPHOCYTIDYL-2-C-METHYL-D-ERYTHRITOL KINASE, CHLOROPLASTIC"/>
    <property type="match status" value="1"/>
</dbReference>
<dbReference type="PANTHER" id="PTHR43527:SF2">
    <property type="entry name" value="4-DIPHOSPHOCYTIDYL-2-C-METHYL-D-ERYTHRITOL KINASE, CHLOROPLASTIC"/>
    <property type="match status" value="1"/>
</dbReference>
<dbReference type="Pfam" id="PF08544">
    <property type="entry name" value="GHMP_kinases_C"/>
    <property type="match status" value="1"/>
</dbReference>
<dbReference type="Pfam" id="PF00288">
    <property type="entry name" value="GHMP_kinases_N"/>
    <property type="match status" value="1"/>
</dbReference>
<dbReference type="PIRSF" id="PIRSF010376">
    <property type="entry name" value="IspE"/>
    <property type="match status" value="1"/>
</dbReference>
<dbReference type="SUPFAM" id="SSF55060">
    <property type="entry name" value="GHMP Kinase, C-terminal domain"/>
    <property type="match status" value="1"/>
</dbReference>
<dbReference type="SUPFAM" id="SSF54211">
    <property type="entry name" value="Ribosomal protein S5 domain 2-like"/>
    <property type="match status" value="1"/>
</dbReference>